<proteinExistence type="inferred from homology"/>
<protein>
    <recommendedName>
        <fullName evidence="1">Bifunctional protein GlmU</fullName>
    </recommendedName>
    <domain>
        <recommendedName>
            <fullName evidence="1">UDP-N-acetylglucosamine pyrophosphorylase</fullName>
            <ecNumber evidence="1">2.7.7.23</ecNumber>
        </recommendedName>
        <alternativeName>
            <fullName evidence="1">N-acetylglucosamine-1-phosphate uridyltransferase</fullName>
        </alternativeName>
    </domain>
    <domain>
        <recommendedName>
            <fullName evidence="1">Glucosamine-1-phosphate N-acetyltransferase</fullName>
            <ecNumber evidence="1">2.3.1.157</ecNumber>
        </recommendedName>
    </domain>
</protein>
<comment type="function">
    <text evidence="1">Catalyzes the last two sequential reactions in the de novo biosynthetic pathway for UDP-N-acetylglucosamine (UDP-GlcNAc). The C-terminal domain catalyzes the transfer of acetyl group from acetyl coenzyme A to glucosamine-1-phosphate (GlcN-1-P) to produce N-acetylglucosamine-1-phosphate (GlcNAc-1-P), which is converted into UDP-GlcNAc by the transfer of uridine 5-monophosphate (from uridine 5-triphosphate), a reaction catalyzed by the N-terminal domain.</text>
</comment>
<comment type="catalytic activity">
    <reaction evidence="1">
        <text>alpha-D-glucosamine 1-phosphate + acetyl-CoA = N-acetyl-alpha-D-glucosamine 1-phosphate + CoA + H(+)</text>
        <dbReference type="Rhea" id="RHEA:13725"/>
        <dbReference type="ChEBI" id="CHEBI:15378"/>
        <dbReference type="ChEBI" id="CHEBI:57287"/>
        <dbReference type="ChEBI" id="CHEBI:57288"/>
        <dbReference type="ChEBI" id="CHEBI:57776"/>
        <dbReference type="ChEBI" id="CHEBI:58516"/>
        <dbReference type="EC" id="2.3.1.157"/>
    </reaction>
</comment>
<comment type="catalytic activity">
    <reaction evidence="1">
        <text>N-acetyl-alpha-D-glucosamine 1-phosphate + UTP + H(+) = UDP-N-acetyl-alpha-D-glucosamine + diphosphate</text>
        <dbReference type="Rhea" id="RHEA:13509"/>
        <dbReference type="ChEBI" id="CHEBI:15378"/>
        <dbReference type="ChEBI" id="CHEBI:33019"/>
        <dbReference type="ChEBI" id="CHEBI:46398"/>
        <dbReference type="ChEBI" id="CHEBI:57705"/>
        <dbReference type="ChEBI" id="CHEBI:57776"/>
        <dbReference type="EC" id="2.7.7.23"/>
    </reaction>
</comment>
<comment type="cofactor">
    <cofactor evidence="1">
        <name>Mg(2+)</name>
        <dbReference type="ChEBI" id="CHEBI:18420"/>
    </cofactor>
    <text evidence="1">Binds 1 Mg(2+) ion per subunit.</text>
</comment>
<comment type="pathway">
    <text evidence="1">Nucleotide-sugar biosynthesis; UDP-N-acetyl-alpha-D-glucosamine biosynthesis; N-acetyl-alpha-D-glucosamine 1-phosphate from alpha-D-glucosamine 6-phosphate (route II): step 2/2.</text>
</comment>
<comment type="pathway">
    <text evidence="1">Nucleotide-sugar biosynthesis; UDP-N-acetyl-alpha-D-glucosamine biosynthesis; UDP-N-acetyl-alpha-D-glucosamine from N-acetyl-alpha-D-glucosamine 1-phosphate: step 1/1.</text>
</comment>
<comment type="pathway">
    <text evidence="1">Bacterial outer membrane biogenesis; LPS lipid A biosynthesis.</text>
</comment>
<comment type="subunit">
    <text evidence="1">Homotrimer.</text>
</comment>
<comment type="subcellular location">
    <subcellularLocation>
        <location evidence="1">Cytoplasm</location>
    </subcellularLocation>
</comment>
<comment type="similarity">
    <text evidence="1">In the N-terminal section; belongs to the N-acetylglucosamine-1-phosphate uridyltransferase family.</text>
</comment>
<comment type="similarity">
    <text evidence="1">In the C-terminal section; belongs to the transferase hexapeptide repeat family.</text>
</comment>
<comment type="sequence caution" evidence="2">
    <conflict type="erroneous initiation">
        <sequence resource="EMBL-CDS" id="ABP92752"/>
    </conflict>
</comment>
<name>GLMU_STRS2</name>
<evidence type="ECO:0000255" key="1">
    <source>
        <dbReference type="HAMAP-Rule" id="MF_01631"/>
    </source>
</evidence>
<evidence type="ECO:0000305" key="2"/>
<gene>
    <name evidence="1" type="primary">glmU</name>
    <name type="ordered locus">SSU98_1594</name>
</gene>
<feature type="chain" id="PRO_0000337743" description="Bifunctional protein GlmU">
    <location>
        <begin position="1"/>
        <end position="460"/>
    </location>
</feature>
<feature type="region of interest" description="Pyrophosphorylase" evidence="1">
    <location>
        <begin position="1"/>
        <end position="230"/>
    </location>
</feature>
<feature type="region of interest" description="Linker" evidence="1">
    <location>
        <begin position="231"/>
        <end position="251"/>
    </location>
</feature>
<feature type="region of interest" description="N-acetyltransferase" evidence="1">
    <location>
        <begin position="252"/>
        <end position="460"/>
    </location>
</feature>
<feature type="active site" description="Proton acceptor" evidence="1">
    <location>
        <position position="363"/>
    </location>
</feature>
<feature type="binding site" evidence="1">
    <location>
        <begin position="9"/>
        <end position="12"/>
    </location>
    <ligand>
        <name>UDP-N-acetyl-alpha-D-glucosamine</name>
        <dbReference type="ChEBI" id="CHEBI:57705"/>
    </ligand>
</feature>
<feature type="binding site" evidence="1">
    <location>
        <position position="23"/>
    </location>
    <ligand>
        <name>UDP-N-acetyl-alpha-D-glucosamine</name>
        <dbReference type="ChEBI" id="CHEBI:57705"/>
    </ligand>
</feature>
<feature type="binding site" evidence="1">
    <location>
        <position position="73"/>
    </location>
    <ligand>
        <name>UDP-N-acetyl-alpha-D-glucosamine</name>
        <dbReference type="ChEBI" id="CHEBI:57705"/>
    </ligand>
</feature>
<feature type="binding site" evidence="1">
    <location>
        <begin position="78"/>
        <end position="79"/>
    </location>
    <ligand>
        <name>UDP-N-acetyl-alpha-D-glucosamine</name>
        <dbReference type="ChEBI" id="CHEBI:57705"/>
    </ligand>
</feature>
<feature type="binding site" evidence="1">
    <location>
        <position position="103"/>
    </location>
    <ligand>
        <name>Mg(2+)</name>
        <dbReference type="ChEBI" id="CHEBI:18420"/>
    </ligand>
</feature>
<feature type="binding site" evidence="1">
    <location>
        <position position="140"/>
    </location>
    <ligand>
        <name>UDP-N-acetyl-alpha-D-glucosamine</name>
        <dbReference type="ChEBI" id="CHEBI:57705"/>
    </ligand>
</feature>
<feature type="binding site" evidence="1">
    <location>
        <position position="155"/>
    </location>
    <ligand>
        <name>UDP-N-acetyl-alpha-D-glucosamine</name>
        <dbReference type="ChEBI" id="CHEBI:57705"/>
    </ligand>
</feature>
<feature type="binding site" evidence="1">
    <location>
        <position position="170"/>
    </location>
    <ligand>
        <name>UDP-N-acetyl-alpha-D-glucosamine</name>
        <dbReference type="ChEBI" id="CHEBI:57705"/>
    </ligand>
</feature>
<feature type="binding site" evidence="1">
    <location>
        <position position="228"/>
    </location>
    <ligand>
        <name>Mg(2+)</name>
        <dbReference type="ChEBI" id="CHEBI:18420"/>
    </ligand>
</feature>
<feature type="binding site" evidence="1">
    <location>
        <position position="228"/>
    </location>
    <ligand>
        <name>UDP-N-acetyl-alpha-D-glucosamine</name>
        <dbReference type="ChEBI" id="CHEBI:57705"/>
    </ligand>
</feature>
<feature type="binding site" evidence="1">
    <location>
        <position position="333"/>
    </location>
    <ligand>
        <name>UDP-N-acetyl-alpha-D-glucosamine</name>
        <dbReference type="ChEBI" id="CHEBI:57705"/>
    </ligand>
</feature>
<feature type="binding site" evidence="1">
    <location>
        <position position="351"/>
    </location>
    <ligand>
        <name>UDP-N-acetyl-alpha-D-glucosamine</name>
        <dbReference type="ChEBI" id="CHEBI:57705"/>
    </ligand>
</feature>
<feature type="binding site" evidence="1">
    <location>
        <position position="366"/>
    </location>
    <ligand>
        <name>UDP-N-acetyl-alpha-D-glucosamine</name>
        <dbReference type="ChEBI" id="CHEBI:57705"/>
    </ligand>
</feature>
<feature type="binding site" evidence="1">
    <location>
        <position position="377"/>
    </location>
    <ligand>
        <name>UDP-N-acetyl-alpha-D-glucosamine</name>
        <dbReference type="ChEBI" id="CHEBI:57705"/>
    </ligand>
</feature>
<feature type="binding site" evidence="1">
    <location>
        <position position="380"/>
    </location>
    <ligand>
        <name>acetyl-CoA</name>
        <dbReference type="ChEBI" id="CHEBI:57288"/>
    </ligand>
</feature>
<feature type="binding site" evidence="1">
    <location>
        <begin position="386"/>
        <end position="387"/>
    </location>
    <ligand>
        <name>acetyl-CoA</name>
        <dbReference type="ChEBI" id="CHEBI:57288"/>
    </ligand>
</feature>
<feature type="binding site" evidence="1">
    <location>
        <position position="405"/>
    </location>
    <ligand>
        <name>acetyl-CoA</name>
        <dbReference type="ChEBI" id="CHEBI:57288"/>
    </ligand>
</feature>
<feature type="binding site" evidence="1">
    <location>
        <position position="423"/>
    </location>
    <ligand>
        <name>acetyl-CoA</name>
        <dbReference type="ChEBI" id="CHEBI:57288"/>
    </ligand>
</feature>
<feature type="binding site" evidence="1">
    <location>
        <position position="440"/>
    </location>
    <ligand>
        <name>acetyl-CoA</name>
        <dbReference type="ChEBI" id="CHEBI:57288"/>
    </ligand>
</feature>
<keyword id="KW-0012">Acyltransferase</keyword>
<keyword id="KW-0133">Cell shape</keyword>
<keyword id="KW-0961">Cell wall biogenesis/degradation</keyword>
<keyword id="KW-0963">Cytoplasm</keyword>
<keyword id="KW-0460">Magnesium</keyword>
<keyword id="KW-0479">Metal-binding</keyword>
<keyword id="KW-0511">Multifunctional enzyme</keyword>
<keyword id="KW-0548">Nucleotidyltransferase</keyword>
<keyword id="KW-0573">Peptidoglycan synthesis</keyword>
<keyword id="KW-0677">Repeat</keyword>
<keyword id="KW-0808">Transferase</keyword>
<dbReference type="EC" id="2.7.7.23" evidence="1"/>
<dbReference type="EC" id="2.3.1.157" evidence="1"/>
<dbReference type="EMBL" id="CP000408">
    <property type="protein sequence ID" value="ABP92752.1"/>
    <property type="status" value="ALT_INIT"/>
    <property type="molecule type" value="Genomic_DNA"/>
</dbReference>
<dbReference type="SMR" id="A4W313"/>
<dbReference type="KEGG" id="ssv:SSU98_1594"/>
<dbReference type="HOGENOM" id="CLU_029499_15_2_9"/>
<dbReference type="UniPathway" id="UPA00113">
    <property type="reaction ID" value="UER00532"/>
</dbReference>
<dbReference type="UniPathway" id="UPA00113">
    <property type="reaction ID" value="UER00533"/>
</dbReference>
<dbReference type="UniPathway" id="UPA00973"/>
<dbReference type="GO" id="GO:0005737">
    <property type="term" value="C:cytoplasm"/>
    <property type="evidence" value="ECO:0007669"/>
    <property type="project" value="UniProtKB-SubCell"/>
</dbReference>
<dbReference type="GO" id="GO:0016020">
    <property type="term" value="C:membrane"/>
    <property type="evidence" value="ECO:0007669"/>
    <property type="project" value="GOC"/>
</dbReference>
<dbReference type="GO" id="GO:0019134">
    <property type="term" value="F:glucosamine-1-phosphate N-acetyltransferase activity"/>
    <property type="evidence" value="ECO:0007669"/>
    <property type="project" value="UniProtKB-UniRule"/>
</dbReference>
<dbReference type="GO" id="GO:0000287">
    <property type="term" value="F:magnesium ion binding"/>
    <property type="evidence" value="ECO:0007669"/>
    <property type="project" value="UniProtKB-UniRule"/>
</dbReference>
<dbReference type="GO" id="GO:0003977">
    <property type="term" value="F:UDP-N-acetylglucosamine diphosphorylase activity"/>
    <property type="evidence" value="ECO:0007669"/>
    <property type="project" value="UniProtKB-UniRule"/>
</dbReference>
<dbReference type="GO" id="GO:0000902">
    <property type="term" value="P:cell morphogenesis"/>
    <property type="evidence" value="ECO:0007669"/>
    <property type="project" value="UniProtKB-UniRule"/>
</dbReference>
<dbReference type="GO" id="GO:0071555">
    <property type="term" value="P:cell wall organization"/>
    <property type="evidence" value="ECO:0007669"/>
    <property type="project" value="UniProtKB-KW"/>
</dbReference>
<dbReference type="GO" id="GO:0009245">
    <property type="term" value="P:lipid A biosynthetic process"/>
    <property type="evidence" value="ECO:0007669"/>
    <property type="project" value="UniProtKB-UniRule"/>
</dbReference>
<dbReference type="GO" id="GO:0009252">
    <property type="term" value="P:peptidoglycan biosynthetic process"/>
    <property type="evidence" value="ECO:0007669"/>
    <property type="project" value="UniProtKB-UniRule"/>
</dbReference>
<dbReference type="GO" id="GO:0008360">
    <property type="term" value="P:regulation of cell shape"/>
    <property type="evidence" value="ECO:0007669"/>
    <property type="project" value="UniProtKB-KW"/>
</dbReference>
<dbReference type="GO" id="GO:0006048">
    <property type="term" value="P:UDP-N-acetylglucosamine biosynthetic process"/>
    <property type="evidence" value="ECO:0007669"/>
    <property type="project" value="UniProtKB-UniPathway"/>
</dbReference>
<dbReference type="CDD" id="cd02540">
    <property type="entry name" value="GT2_GlmU_N_bac"/>
    <property type="match status" value="1"/>
</dbReference>
<dbReference type="CDD" id="cd03353">
    <property type="entry name" value="LbH_GlmU_C"/>
    <property type="match status" value="1"/>
</dbReference>
<dbReference type="Gene3D" id="2.160.10.10">
    <property type="entry name" value="Hexapeptide repeat proteins"/>
    <property type="match status" value="1"/>
</dbReference>
<dbReference type="Gene3D" id="3.90.550.10">
    <property type="entry name" value="Spore Coat Polysaccharide Biosynthesis Protein SpsA, Chain A"/>
    <property type="match status" value="1"/>
</dbReference>
<dbReference type="HAMAP" id="MF_01631">
    <property type="entry name" value="GlmU"/>
    <property type="match status" value="1"/>
</dbReference>
<dbReference type="InterPro" id="IPR005882">
    <property type="entry name" value="Bifunctional_GlmU"/>
</dbReference>
<dbReference type="InterPro" id="IPR050065">
    <property type="entry name" value="GlmU-like"/>
</dbReference>
<dbReference type="InterPro" id="IPR038009">
    <property type="entry name" value="GlmU_C_LbH"/>
</dbReference>
<dbReference type="InterPro" id="IPR001451">
    <property type="entry name" value="Hexapep"/>
</dbReference>
<dbReference type="InterPro" id="IPR018357">
    <property type="entry name" value="Hexapep_transf_CS"/>
</dbReference>
<dbReference type="InterPro" id="IPR005835">
    <property type="entry name" value="NTP_transferase_dom"/>
</dbReference>
<dbReference type="InterPro" id="IPR029044">
    <property type="entry name" value="Nucleotide-diphossugar_trans"/>
</dbReference>
<dbReference type="InterPro" id="IPR011004">
    <property type="entry name" value="Trimer_LpxA-like_sf"/>
</dbReference>
<dbReference type="NCBIfam" id="TIGR01173">
    <property type="entry name" value="glmU"/>
    <property type="match status" value="1"/>
</dbReference>
<dbReference type="NCBIfam" id="NF010934">
    <property type="entry name" value="PRK14354.1"/>
    <property type="match status" value="1"/>
</dbReference>
<dbReference type="PANTHER" id="PTHR43584:SF3">
    <property type="entry name" value="BIFUNCTIONAL PROTEIN GLMU"/>
    <property type="match status" value="1"/>
</dbReference>
<dbReference type="PANTHER" id="PTHR43584">
    <property type="entry name" value="NUCLEOTIDYL TRANSFERASE"/>
    <property type="match status" value="1"/>
</dbReference>
<dbReference type="Pfam" id="PF14602">
    <property type="entry name" value="Hexapep_2"/>
    <property type="match status" value="1"/>
</dbReference>
<dbReference type="Pfam" id="PF00483">
    <property type="entry name" value="NTP_transferase"/>
    <property type="match status" value="1"/>
</dbReference>
<dbReference type="SUPFAM" id="SSF53448">
    <property type="entry name" value="Nucleotide-diphospho-sugar transferases"/>
    <property type="match status" value="1"/>
</dbReference>
<dbReference type="SUPFAM" id="SSF51161">
    <property type="entry name" value="Trimeric LpxA-like enzymes"/>
    <property type="match status" value="1"/>
</dbReference>
<dbReference type="PROSITE" id="PS00101">
    <property type="entry name" value="HEXAPEP_TRANSFERASES"/>
    <property type="match status" value="1"/>
</dbReference>
<reference key="1">
    <citation type="journal article" date="2007" name="PLoS ONE">
        <title>A glimpse of streptococcal toxic shock syndrome from comparative genomics of S. suis 2 Chinese isolates.</title>
        <authorList>
            <person name="Chen C."/>
            <person name="Tang J."/>
            <person name="Dong W."/>
            <person name="Wang C."/>
            <person name="Feng Y."/>
            <person name="Wang J."/>
            <person name="Zheng F."/>
            <person name="Pan X."/>
            <person name="Liu D."/>
            <person name="Li M."/>
            <person name="Song Y."/>
            <person name="Zhu X."/>
            <person name="Sun H."/>
            <person name="Feng T."/>
            <person name="Guo Z."/>
            <person name="Ju A."/>
            <person name="Ge J."/>
            <person name="Dong Y."/>
            <person name="Sun W."/>
            <person name="Jiang Y."/>
            <person name="Wang J."/>
            <person name="Yan J."/>
            <person name="Yang H."/>
            <person name="Wang X."/>
            <person name="Gao G.F."/>
            <person name="Yang R."/>
            <person name="Wang J."/>
            <person name="Yu J."/>
        </authorList>
    </citation>
    <scope>NUCLEOTIDE SEQUENCE [LARGE SCALE GENOMIC DNA]</scope>
    <source>
        <strain>98HAH33</strain>
    </source>
</reference>
<sequence>MSNNYAIILAAGKGTRMKSDLPKVLHKVAGITMLEHVKRAVDAMEPAKTVTIVGHKAELVQAVLEGQSEFALQSEQLGTGHAVMMAEPALAGLEGQTLVIAGDTPLITGESLKNLINFHVSHKNVATILTAQADNPFGYGRIIRNADGEVQKIVEQKDANDFEKQVKEINTGTYLFDNKRLFEALKDINTDNAQGEYYLTDVISIFRQAGEKVGAYVLRDFDESLGVNDRVALATAEAVMRKRINEKHMVNGVTFINPDATYIDIDVEIGAEAVIEANVVLKGQTVIGERTVLTNGTRVRDAKIAADAVISNSDIEESVIEEGVTVGPYAHIRPGSLLKKDVHVGNFVEIKASTLGQGTKSGHLTYLGNATIGNNVNVGAGTITVNYDGKNKFKTTVGDNAFVGSNSTIIAPVTIGDNALLAAGSVITKDIPEDAIGIGRGRQENKEGYATRFPFHPSQK</sequence>
<organism>
    <name type="scientific">Streptococcus suis (strain 98HAH33)</name>
    <dbReference type="NCBI Taxonomy" id="391296"/>
    <lineage>
        <taxon>Bacteria</taxon>
        <taxon>Bacillati</taxon>
        <taxon>Bacillota</taxon>
        <taxon>Bacilli</taxon>
        <taxon>Lactobacillales</taxon>
        <taxon>Streptococcaceae</taxon>
        <taxon>Streptococcus</taxon>
    </lineage>
</organism>
<accession>A4W313</accession>